<dbReference type="EMBL" id="CP000503">
    <property type="protein sequence ID" value="ABM23923.1"/>
    <property type="molecule type" value="Genomic_DNA"/>
</dbReference>
<dbReference type="RefSeq" id="WP_011788446.1">
    <property type="nucleotide sequence ID" value="NC_008750.1"/>
</dbReference>
<dbReference type="SMR" id="A1RGX8"/>
<dbReference type="GeneID" id="67444444"/>
<dbReference type="KEGG" id="shw:Sputw3181_1073"/>
<dbReference type="HOGENOM" id="CLU_148518_0_0_6"/>
<dbReference type="Proteomes" id="UP000002597">
    <property type="component" value="Chromosome"/>
</dbReference>
<dbReference type="GO" id="GO:0022627">
    <property type="term" value="C:cytosolic small ribosomal subunit"/>
    <property type="evidence" value="ECO:0007669"/>
    <property type="project" value="TreeGrafter"/>
</dbReference>
<dbReference type="GO" id="GO:0019843">
    <property type="term" value="F:rRNA binding"/>
    <property type="evidence" value="ECO:0007669"/>
    <property type="project" value="UniProtKB-UniRule"/>
</dbReference>
<dbReference type="GO" id="GO:0003735">
    <property type="term" value="F:structural constituent of ribosome"/>
    <property type="evidence" value="ECO:0007669"/>
    <property type="project" value="InterPro"/>
</dbReference>
<dbReference type="GO" id="GO:0006412">
    <property type="term" value="P:translation"/>
    <property type="evidence" value="ECO:0007669"/>
    <property type="project" value="UniProtKB-UniRule"/>
</dbReference>
<dbReference type="CDD" id="cd00353">
    <property type="entry name" value="Ribosomal_S15p_S13e"/>
    <property type="match status" value="1"/>
</dbReference>
<dbReference type="FunFam" id="1.10.287.10:FF:000002">
    <property type="entry name" value="30S ribosomal protein S15"/>
    <property type="match status" value="1"/>
</dbReference>
<dbReference type="Gene3D" id="6.10.250.3130">
    <property type="match status" value="1"/>
</dbReference>
<dbReference type="Gene3D" id="1.10.287.10">
    <property type="entry name" value="S15/NS1, RNA-binding"/>
    <property type="match status" value="1"/>
</dbReference>
<dbReference type="HAMAP" id="MF_01343_B">
    <property type="entry name" value="Ribosomal_uS15_B"/>
    <property type="match status" value="1"/>
</dbReference>
<dbReference type="InterPro" id="IPR000589">
    <property type="entry name" value="Ribosomal_uS15"/>
</dbReference>
<dbReference type="InterPro" id="IPR005290">
    <property type="entry name" value="Ribosomal_uS15_bac-type"/>
</dbReference>
<dbReference type="InterPro" id="IPR009068">
    <property type="entry name" value="uS15_NS1_RNA-bd_sf"/>
</dbReference>
<dbReference type="NCBIfam" id="TIGR00952">
    <property type="entry name" value="S15_bact"/>
    <property type="match status" value="1"/>
</dbReference>
<dbReference type="PANTHER" id="PTHR23321">
    <property type="entry name" value="RIBOSOMAL PROTEIN S15, BACTERIAL AND ORGANELLAR"/>
    <property type="match status" value="1"/>
</dbReference>
<dbReference type="PANTHER" id="PTHR23321:SF26">
    <property type="entry name" value="SMALL RIBOSOMAL SUBUNIT PROTEIN US15M"/>
    <property type="match status" value="1"/>
</dbReference>
<dbReference type="Pfam" id="PF00312">
    <property type="entry name" value="Ribosomal_S15"/>
    <property type="match status" value="1"/>
</dbReference>
<dbReference type="SMART" id="SM01387">
    <property type="entry name" value="Ribosomal_S15"/>
    <property type="match status" value="1"/>
</dbReference>
<dbReference type="SUPFAM" id="SSF47060">
    <property type="entry name" value="S15/NS1 RNA-binding domain"/>
    <property type="match status" value="1"/>
</dbReference>
<dbReference type="PROSITE" id="PS00362">
    <property type="entry name" value="RIBOSOMAL_S15"/>
    <property type="match status" value="1"/>
</dbReference>
<proteinExistence type="inferred from homology"/>
<reference key="1">
    <citation type="submission" date="2006-12" db="EMBL/GenBank/DDBJ databases">
        <title>Complete sequence of Shewanella sp. W3-18-1.</title>
        <authorList>
            <consortium name="US DOE Joint Genome Institute"/>
            <person name="Copeland A."/>
            <person name="Lucas S."/>
            <person name="Lapidus A."/>
            <person name="Barry K."/>
            <person name="Detter J.C."/>
            <person name="Glavina del Rio T."/>
            <person name="Hammon N."/>
            <person name="Israni S."/>
            <person name="Dalin E."/>
            <person name="Tice H."/>
            <person name="Pitluck S."/>
            <person name="Chain P."/>
            <person name="Malfatti S."/>
            <person name="Shin M."/>
            <person name="Vergez L."/>
            <person name="Schmutz J."/>
            <person name="Larimer F."/>
            <person name="Land M."/>
            <person name="Hauser L."/>
            <person name="Kyrpides N."/>
            <person name="Lykidis A."/>
            <person name="Tiedje J."/>
            <person name="Richardson P."/>
        </authorList>
    </citation>
    <scope>NUCLEOTIDE SEQUENCE [LARGE SCALE GENOMIC DNA]</scope>
    <source>
        <strain>W3-18-1</strain>
    </source>
</reference>
<feature type="chain" id="PRO_1000054874" description="Small ribosomal subunit protein uS15">
    <location>
        <begin position="1"/>
        <end position="89"/>
    </location>
</feature>
<protein>
    <recommendedName>
        <fullName evidence="1">Small ribosomal subunit protein uS15</fullName>
    </recommendedName>
    <alternativeName>
        <fullName evidence="2">30S ribosomal protein S15</fullName>
    </alternativeName>
</protein>
<keyword id="KW-0687">Ribonucleoprotein</keyword>
<keyword id="KW-0689">Ribosomal protein</keyword>
<keyword id="KW-0694">RNA-binding</keyword>
<keyword id="KW-0699">rRNA-binding</keyword>
<accession>A1RGX8</accession>
<evidence type="ECO:0000255" key="1">
    <source>
        <dbReference type="HAMAP-Rule" id="MF_01343"/>
    </source>
</evidence>
<evidence type="ECO:0000305" key="2"/>
<name>RS15_SHESW</name>
<comment type="function">
    <text evidence="1">One of the primary rRNA binding proteins, it binds directly to 16S rRNA where it helps nucleate assembly of the platform of the 30S subunit by binding and bridging several RNA helices of the 16S rRNA.</text>
</comment>
<comment type="function">
    <text evidence="1">Forms an intersubunit bridge (bridge B4) with the 23S rRNA of the 50S subunit in the ribosome.</text>
</comment>
<comment type="subunit">
    <text evidence="1">Part of the 30S ribosomal subunit. Forms a bridge to the 50S subunit in the 70S ribosome, contacting the 23S rRNA.</text>
</comment>
<comment type="similarity">
    <text evidence="1">Belongs to the universal ribosomal protein uS15 family.</text>
</comment>
<sequence>MSLSTEAKAKILAEFGRGENDTGSTEVQVALLTAQINHLQDHFKEHIHDHHSRRGLLRMVSARRKLTAYLKRTDAERYTALIQKLGLRR</sequence>
<gene>
    <name evidence="1" type="primary">rpsO</name>
    <name type="ordered locus">Sputw3181_1073</name>
</gene>
<organism>
    <name type="scientific">Shewanella sp. (strain W3-18-1)</name>
    <dbReference type="NCBI Taxonomy" id="351745"/>
    <lineage>
        <taxon>Bacteria</taxon>
        <taxon>Pseudomonadati</taxon>
        <taxon>Pseudomonadota</taxon>
        <taxon>Gammaproteobacteria</taxon>
        <taxon>Alteromonadales</taxon>
        <taxon>Shewanellaceae</taxon>
        <taxon>Shewanella</taxon>
    </lineage>
</organism>